<name>FRITZ_RAT</name>
<evidence type="ECO:0000250" key="1">
    <source>
        <dbReference type="UniProtKB" id="Q32NR9"/>
    </source>
</evidence>
<evidence type="ECO:0000250" key="2">
    <source>
        <dbReference type="UniProtKB" id="Q8C456"/>
    </source>
</evidence>
<evidence type="ECO:0000256" key="3">
    <source>
        <dbReference type="SAM" id="MobiDB-lite"/>
    </source>
</evidence>
<evidence type="ECO:0000305" key="4"/>
<organism>
    <name type="scientific">Rattus norvegicus</name>
    <name type="common">Rat</name>
    <dbReference type="NCBI Taxonomy" id="10116"/>
    <lineage>
        <taxon>Eukaryota</taxon>
        <taxon>Metazoa</taxon>
        <taxon>Chordata</taxon>
        <taxon>Craniata</taxon>
        <taxon>Vertebrata</taxon>
        <taxon>Euteleostomi</taxon>
        <taxon>Mammalia</taxon>
        <taxon>Eutheria</taxon>
        <taxon>Euarchontoglires</taxon>
        <taxon>Glires</taxon>
        <taxon>Rodentia</taxon>
        <taxon>Myomorpha</taxon>
        <taxon>Muroidea</taxon>
        <taxon>Muridae</taxon>
        <taxon>Murinae</taxon>
        <taxon>Rattus</taxon>
    </lineage>
</organism>
<keyword id="KW-1003">Cell membrane</keyword>
<keyword id="KW-0966">Cell projection</keyword>
<keyword id="KW-0969">Cilium</keyword>
<keyword id="KW-0970">Cilium biogenesis/degradation</keyword>
<keyword id="KW-0963">Cytoplasm</keyword>
<keyword id="KW-0206">Cytoskeleton</keyword>
<keyword id="KW-0472">Membrane</keyword>
<keyword id="KW-1185">Reference proteome</keyword>
<keyword id="KW-0677">Repeat</keyword>
<keyword id="KW-0853">WD repeat</keyword>
<accession>B1WC10</accession>
<comment type="function">
    <text evidence="1 2">Probable effector of the planar cell polarity signaling pathway which regulates the septin cytoskeleton in both ciliogenesis and collective cell movements. Together with FUZ and WDPCP proposed to function as core component of the CPLANE (ciliogenesis and planar polarity effectors) complex involved in the recruitment of peripheral IFT-A proteins to basal bodies. Binds phosphatidylinositol 3-phosphate with highest affinity, followed by phosphatidylinositol 4-phosphate and phosphatidylinositol 5-phosphate (By similarity).</text>
</comment>
<comment type="subunit">
    <text evidence="2">Component of the CPLANE (ciliogenesis and planar polarity effectors) complex, composed of INTU, FUZ and WDPCP. Interacts with CPLANE1.</text>
</comment>
<comment type="subcellular location">
    <subcellularLocation>
        <location evidence="1">Cell membrane</location>
    </subcellularLocation>
    <subcellularLocation>
        <location evidence="1">Cytoplasm</location>
        <location evidence="1">Cytoskeleton</location>
        <location evidence="1">Cilium axoneme</location>
    </subcellularLocation>
    <subcellularLocation>
        <location evidence="1">Cytoplasm</location>
        <location evidence="1">Cytoskeleton</location>
        <location evidence="1">Cilium basal body</location>
    </subcellularLocation>
</comment>
<comment type="similarity">
    <text evidence="4">Belongs to the WD repeat fritz family.</text>
</comment>
<proteinExistence type="evidence at transcript level"/>
<reference key="1">
    <citation type="journal article" date="2004" name="Genome Res.">
        <title>The status, quality, and expansion of the NIH full-length cDNA project: the Mammalian Gene Collection (MGC).</title>
        <authorList>
            <consortium name="The MGC Project Team"/>
        </authorList>
    </citation>
    <scope>NUCLEOTIDE SEQUENCE [LARGE SCALE MRNA]</scope>
    <source>
        <tissue>Lung</tissue>
    </source>
</reference>
<dbReference type="EMBL" id="BC161962">
    <property type="protein sequence ID" value="AAI61962.1"/>
    <property type="molecule type" value="mRNA"/>
</dbReference>
<dbReference type="RefSeq" id="NP_001121009.1">
    <property type="nucleotide sequence ID" value="NM_001127537.1"/>
</dbReference>
<dbReference type="SMR" id="B1WC10"/>
<dbReference type="FunCoup" id="B1WC10">
    <property type="interactions" value="1202"/>
</dbReference>
<dbReference type="STRING" id="10116.ENSRNOP00000070201"/>
<dbReference type="PhosphoSitePlus" id="B1WC10"/>
<dbReference type="PaxDb" id="10116-ENSRNOP00000011567"/>
<dbReference type="GeneID" id="305552"/>
<dbReference type="KEGG" id="rno:305552"/>
<dbReference type="UCSC" id="RGD:1309501">
    <property type="organism name" value="rat"/>
</dbReference>
<dbReference type="AGR" id="RGD:1309501"/>
<dbReference type="CTD" id="51057"/>
<dbReference type="RGD" id="1309501">
    <property type="gene designation" value="Wdpcp"/>
</dbReference>
<dbReference type="eggNOG" id="ENOG502QR8Y">
    <property type="taxonomic scope" value="Eukaryota"/>
</dbReference>
<dbReference type="InParanoid" id="B1WC10"/>
<dbReference type="PhylomeDB" id="B1WC10"/>
<dbReference type="PRO" id="PR:B1WC10"/>
<dbReference type="Proteomes" id="UP000002494">
    <property type="component" value="Unplaced"/>
</dbReference>
<dbReference type="GO" id="GO:0097541">
    <property type="term" value="C:axonemal basal plate"/>
    <property type="evidence" value="ECO:0000266"/>
    <property type="project" value="RGD"/>
</dbReference>
<dbReference type="GO" id="GO:0005930">
    <property type="term" value="C:axoneme"/>
    <property type="evidence" value="ECO:0000250"/>
    <property type="project" value="UniProtKB"/>
</dbReference>
<dbReference type="GO" id="GO:0005886">
    <property type="term" value="C:plasma membrane"/>
    <property type="evidence" value="ECO:0007669"/>
    <property type="project" value="UniProtKB-SubCell"/>
</dbReference>
<dbReference type="GO" id="GO:0035091">
    <property type="term" value="F:phosphatidylinositol binding"/>
    <property type="evidence" value="ECO:0000250"/>
    <property type="project" value="UniProtKB"/>
</dbReference>
<dbReference type="GO" id="GO:0002093">
    <property type="term" value="P:auditory receptor cell morphogenesis"/>
    <property type="evidence" value="ECO:0000266"/>
    <property type="project" value="RGD"/>
</dbReference>
<dbReference type="GO" id="GO:0043010">
    <property type="term" value="P:camera-type eye development"/>
    <property type="evidence" value="ECO:0000266"/>
    <property type="project" value="RGD"/>
</dbReference>
<dbReference type="GO" id="GO:0060271">
    <property type="term" value="P:cilium assembly"/>
    <property type="evidence" value="ECO:0000250"/>
    <property type="project" value="UniProtKB"/>
</dbReference>
<dbReference type="GO" id="GO:0044782">
    <property type="term" value="P:cilium organization"/>
    <property type="evidence" value="ECO:0000266"/>
    <property type="project" value="RGD"/>
</dbReference>
<dbReference type="GO" id="GO:0072359">
    <property type="term" value="P:circulatory system development"/>
    <property type="evidence" value="ECO:0000266"/>
    <property type="project" value="RGD"/>
</dbReference>
<dbReference type="GO" id="GO:0055123">
    <property type="term" value="P:digestive system development"/>
    <property type="evidence" value="ECO:0000266"/>
    <property type="project" value="RGD"/>
</dbReference>
<dbReference type="GO" id="GO:0042733">
    <property type="term" value="P:embryonic digit morphogenesis"/>
    <property type="evidence" value="ECO:0000266"/>
    <property type="project" value="RGD"/>
</dbReference>
<dbReference type="GO" id="GO:0048568">
    <property type="term" value="P:embryonic organ development"/>
    <property type="evidence" value="ECO:0000266"/>
    <property type="project" value="RGD"/>
</dbReference>
<dbReference type="GO" id="GO:0045184">
    <property type="term" value="P:establishment of protein localization"/>
    <property type="evidence" value="ECO:0000266"/>
    <property type="project" value="RGD"/>
</dbReference>
<dbReference type="GO" id="GO:0001822">
    <property type="term" value="P:kidney development"/>
    <property type="evidence" value="ECO:0000266"/>
    <property type="project" value="RGD"/>
</dbReference>
<dbReference type="GO" id="GO:0007399">
    <property type="term" value="P:nervous system development"/>
    <property type="evidence" value="ECO:0000266"/>
    <property type="project" value="RGD"/>
</dbReference>
<dbReference type="GO" id="GO:0090521">
    <property type="term" value="P:podocyte cell migration"/>
    <property type="evidence" value="ECO:0000266"/>
    <property type="project" value="RGD"/>
</dbReference>
<dbReference type="GO" id="GO:0016476">
    <property type="term" value="P:regulation of embryonic cell shape"/>
    <property type="evidence" value="ECO:0000250"/>
    <property type="project" value="UniProtKB"/>
</dbReference>
<dbReference type="GO" id="GO:2000114">
    <property type="term" value="P:regulation of establishment of cell polarity"/>
    <property type="evidence" value="ECO:0000266"/>
    <property type="project" value="RGD"/>
</dbReference>
<dbReference type="GO" id="GO:0010762">
    <property type="term" value="P:regulation of fibroblast migration"/>
    <property type="evidence" value="ECO:0000266"/>
    <property type="project" value="RGD"/>
</dbReference>
<dbReference type="GO" id="GO:0051893">
    <property type="term" value="P:regulation of focal adhesion assembly"/>
    <property type="evidence" value="ECO:0000266"/>
    <property type="project" value="RGD"/>
</dbReference>
<dbReference type="GO" id="GO:0032880">
    <property type="term" value="P:regulation of protein localization"/>
    <property type="evidence" value="ECO:0000250"/>
    <property type="project" value="UniProtKB"/>
</dbReference>
<dbReference type="GO" id="GO:1900027">
    <property type="term" value="P:regulation of ruffle assembly"/>
    <property type="evidence" value="ECO:0000266"/>
    <property type="project" value="RGD"/>
</dbReference>
<dbReference type="GO" id="GO:0060541">
    <property type="term" value="P:respiratory system development"/>
    <property type="evidence" value="ECO:0000266"/>
    <property type="project" value="RGD"/>
</dbReference>
<dbReference type="GO" id="GO:0060021">
    <property type="term" value="P:roof of mouth development"/>
    <property type="evidence" value="ECO:0000266"/>
    <property type="project" value="RGD"/>
</dbReference>
<dbReference type="GO" id="GO:0032185">
    <property type="term" value="P:septin cytoskeleton organization"/>
    <property type="evidence" value="ECO:0000250"/>
    <property type="project" value="UniProtKB"/>
</dbReference>
<dbReference type="GO" id="GO:0007224">
    <property type="term" value="P:smoothened signaling pathway"/>
    <property type="evidence" value="ECO:0000266"/>
    <property type="project" value="RGD"/>
</dbReference>
<dbReference type="GO" id="GO:0043587">
    <property type="term" value="P:tongue morphogenesis"/>
    <property type="evidence" value="ECO:0000266"/>
    <property type="project" value="RGD"/>
</dbReference>
<dbReference type="Gene3D" id="2.130.10.10">
    <property type="entry name" value="YVTN repeat-like/Quinoprotein amine dehydrogenase"/>
    <property type="match status" value="1"/>
</dbReference>
<dbReference type="InterPro" id="IPR024511">
    <property type="entry name" value="Frtz"/>
</dbReference>
<dbReference type="InterPro" id="IPR015943">
    <property type="entry name" value="WD40/YVTN_repeat-like_dom_sf"/>
</dbReference>
<dbReference type="PANTHER" id="PTHR13667">
    <property type="entry name" value="HOMOLOC-13"/>
    <property type="match status" value="1"/>
</dbReference>
<dbReference type="PANTHER" id="PTHR13667:SF5">
    <property type="entry name" value="WD REPEAT-CONTAINING AND PLANAR CELL POLARITY EFFECTOR PROTEIN FRITZ HOMOLOG"/>
    <property type="match status" value="1"/>
</dbReference>
<dbReference type="Pfam" id="PF11768">
    <property type="entry name" value="Frtz"/>
    <property type="match status" value="1"/>
</dbReference>
<dbReference type="SUPFAM" id="SSF117289">
    <property type="entry name" value="Nucleoporin domain"/>
    <property type="match status" value="1"/>
</dbReference>
<feature type="chain" id="PRO_0000406196" description="WD repeat-containing and planar cell polarity effector protein fritz homolog">
    <location>
        <begin position="1"/>
        <end position="726"/>
    </location>
</feature>
<feature type="repeat" description="WD 1">
    <location>
        <begin position="305"/>
        <end position="343"/>
    </location>
</feature>
<feature type="repeat" description="WD 2">
    <location>
        <begin position="344"/>
        <end position="383"/>
    </location>
</feature>
<feature type="region of interest" description="Disordered" evidence="3">
    <location>
        <begin position="642"/>
        <end position="717"/>
    </location>
</feature>
<feature type="compositionally biased region" description="Polar residues" evidence="3">
    <location>
        <begin position="642"/>
        <end position="660"/>
    </location>
</feature>
<feature type="compositionally biased region" description="Acidic residues" evidence="3">
    <location>
        <begin position="672"/>
        <end position="685"/>
    </location>
</feature>
<feature type="compositionally biased region" description="Basic and acidic residues" evidence="3">
    <location>
        <begin position="701"/>
        <end position="712"/>
    </location>
</feature>
<gene>
    <name type="primary">Wdpcp</name>
</gene>
<sequence length="726" mass="81910">MSFCLTELHLWSLKSTLHIADRDIGVYQYYDKKDLPVSAAEHGNLEEKQRLAESRDYPWTLKNRRPEKLRDSLKELEELMQNSQCVLCQWKSKHICQLLFGSGVLVSLSLSGPQLEKVVIDRSLVGKLISDTISDALLTDSFIILSFLAQNKLCFIQFAKKMDSLDVNKRLEKLSALDYKISYHDIPGPATRTVDRHLAINSTQDLAVCWWPLLSDDAWPWTPIASEKDRANMLLLGFTQGGLEVLSSVRTEWNPLDVHFGTRQPYQVFTVECSFSVDQEPMADSCIYESVRNKLHCVSVTRIPLRSKAISCCKNSTEDKLIVGCEDSSVILYEAHRGVTLLAQAELMPSLISCHPSGAILLVGSNQGELQVFDIALSPINIQLLAEDCLPKETLQFNKFFDFSSSLVHMQWIAPPIVFQKPKRGEICDLLFLRFNRGPLGVLLFKLGVLRRGQLGLVDLIFQYIHCDEVYEAVSVLSSMNWDTLGQQCFISMSTIVNHLLRQRLTPEREAQLEASLGTFYAPARPLLDTTVLAYRDPVGTYARRLFHHLLRYQRFEKAFLLAVDIGARDLFMDIHYLALDMGELALAEVARRRADDIDVESVCSGVELLGPLDRRDMLNEGFAGSALTPEGGNPFPDLLPSSGSTPKHTIQQKIPNGPSNRRAIERKNEVMEETEEEEEEEEEAAACTDSSVATTWDAEGELREDHRRQDTEDVGSLRMVHFGLV</sequence>
<protein>
    <recommendedName>
        <fullName>WD repeat-containing and planar cell polarity effector protein fritz homolog</fullName>
    </recommendedName>
    <alternativeName>
        <fullName>WD repeat-containing and planar cell polarity effector protein</fullName>
    </alternativeName>
</protein>